<reference key="1">
    <citation type="submission" date="2007-12" db="EMBL/GenBank/DDBJ databases">
        <title>Complete sequence of Methylobacterium extorquens PA1.</title>
        <authorList>
            <consortium name="US DOE Joint Genome Institute"/>
            <person name="Copeland A."/>
            <person name="Lucas S."/>
            <person name="Lapidus A."/>
            <person name="Barry K."/>
            <person name="Glavina del Rio T."/>
            <person name="Dalin E."/>
            <person name="Tice H."/>
            <person name="Pitluck S."/>
            <person name="Saunders E."/>
            <person name="Brettin T."/>
            <person name="Bruce D."/>
            <person name="Detter J.C."/>
            <person name="Han C."/>
            <person name="Schmutz J."/>
            <person name="Larimer F."/>
            <person name="Land M."/>
            <person name="Hauser L."/>
            <person name="Kyrpides N."/>
            <person name="Kim E."/>
            <person name="Marx C."/>
            <person name="Richardson P."/>
        </authorList>
    </citation>
    <scope>NUCLEOTIDE SEQUENCE [LARGE SCALE GENOMIC DNA]</scope>
    <source>
        <strain>PA1</strain>
    </source>
</reference>
<protein>
    <recommendedName>
        <fullName evidence="1">2,3-bisphosphoglycerate-dependent phosphoglycerate mutase</fullName>
        <shortName evidence="1">BPG-dependent PGAM</shortName>
        <shortName evidence="1">PGAM</shortName>
        <shortName evidence="1">Phosphoglyceromutase</shortName>
        <shortName evidence="1">dPGM</shortName>
        <ecNumber evidence="1">5.4.2.11</ecNumber>
    </recommendedName>
</protein>
<keyword id="KW-0312">Gluconeogenesis</keyword>
<keyword id="KW-0324">Glycolysis</keyword>
<keyword id="KW-0413">Isomerase</keyword>
<organism>
    <name type="scientific">Methylorubrum extorquens (strain PA1)</name>
    <name type="common">Methylobacterium extorquens</name>
    <dbReference type="NCBI Taxonomy" id="419610"/>
    <lineage>
        <taxon>Bacteria</taxon>
        <taxon>Pseudomonadati</taxon>
        <taxon>Pseudomonadota</taxon>
        <taxon>Alphaproteobacteria</taxon>
        <taxon>Hyphomicrobiales</taxon>
        <taxon>Methylobacteriaceae</taxon>
        <taxon>Methylorubrum</taxon>
    </lineage>
</organism>
<dbReference type="EC" id="5.4.2.11" evidence="1"/>
<dbReference type="EMBL" id="CP000908">
    <property type="protein sequence ID" value="ABY30901.1"/>
    <property type="molecule type" value="Genomic_DNA"/>
</dbReference>
<dbReference type="RefSeq" id="WP_003598075.1">
    <property type="nucleotide sequence ID" value="NC_010172.1"/>
</dbReference>
<dbReference type="SMR" id="A9W5P5"/>
<dbReference type="KEGG" id="mex:Mext_2506"/>
<dbReference type="eggNOG" id="COG0588">
    <property type="taxonomic scope" value="Bacteria"/>
</dbReference>
<dbReference type="HOGENOM" id="CLU_033323_1_4_5"/>
<dbReference type="BioCyc" id="MEXT419610:MEXT_RS12640-MONOMER"/>
<dbReference type="UniPathway" id="UPA00109">
    <property type="reaction ID" value="UER00186"/>
</dbReference>
<dbReference type="GO" id="GO:0004619">
    <property type="term" value="F:phosphoglycerate mutase activity"/>
    <property type="evidence" value="ECO:0007669"/>
    <property type="project" value="UniProtKB-EC"/>
</dbReference>
<dbReference type="GO" id="GO:0006094">
    <property type="term" value="P:gluconeogenesis"/>
    <property type="evidence" value="ECO:0007669"/>
    <property type="project" value="UniProtKB-UniRule"/>
</dbReference>
<dbReference type="GO" id="GO:0006096">
    <property type="term" value="P:glycolytic process"/>
    <property type="evidence" value="ECO:0007669"/>
    <property type="project" value="UniProtKB-UniRule"/>
</dbReference>
<dbReference type="CDD" id="cd07067">
    <property type="entry name" value="HP_PGM_like"/>
    <property type="match status" value="1"/>
</dbReference>
<dbReference type="Gene3D" id="3.40.50.1240">
    <property type="entry name" value="Phosphoglycerate mutase-like"/>
    <property type="match status" value="1"/>
</dbReference>
<dbReference type="HAMAP" id="MF_01039">
    <property type="entry name" value="PGAM_GpmA"/>
    <property type="match status" value="1"/>
</dbReference>
<dbReference type="InterPro" id="IPR013078">
    <property type="entry name" value="His_Pase_superF_clade-1"/>
</dbReference>
<dbReference type="InterPro" id="IPR029033">
    <property type="entry name" value="His_PPase_superfam"/>
</dbReference>
<dbReference type="InterPro" id="IPR001345">
    <property type="entry name" value="PG/BPGM_mutase_AS"/>
</dbReference>
<dbReference type="InterPro" id="IPR005952">
    <property type="entry name" value="Phosphogly_mut1"/>
</dbReference>
<dbReference type="NCBIfam" id="TIGR01258">
    <property type="entry name" value="pgm_1"/>
    <property type="match status" value="2"/>
</dbReference>
<dbReference type="NCBIfam" id="NF002339">
    <property type="entry name" value="PRK01295.1"/>
    <property type="match status" value="1"/>
</dbReference>
<dbReference type="PANTHER" id="PTHR11931">
    <property type="entry name" value="PHOSPHOGLYCERATE MUTASE"/>
    <property type="match status" value="1"/>
</dbReference>
<dbReference type="Pfam" id="PF00300">
    <property type="entry name" value="His_Phos_1"/>
    <property type="match status" value="1"/>
</dbReference>
<dbReference type="PIRSF" id="PIRSF000709">
    <property type="entry name" value="6PFK_2-Ptase"/>
    <property type="match status" value="1"/>
</dbReference>
<dbReference type="SMART" id="SM00855">
    <property type="entry name" value="PGAM"/>
    <property type="match status" value="1"/>
</dbReference>
<dbReference type="SUPFAM" id="SSF53254">
    <property type="entry name" value="Phosphoglycerate mutase-like"/>
    <property type="match status" value="1"/>
</dbReference>
<dbReference type="PROSITE" id="PS00175">
    <property type="entry name" value="PG_MUTASE"/>
    <property type="match status" value="1"/>
</dbReference>
<name>GPMA_METEP</name>
<proteinExistence type="inferred from homology"/>
<comment type="function">
    <text evidence="1">Catalyzes the interconversion of 2-phosphoglycerate and 3-phosphoglycerate.</text>
</comment>
<comment type="catalytic activity">
    <reaction evidence="1">
        <text>(2R)-2-phosphoglycerate = (2R)-3-phosphoglycerate</text>
        <dbReference type="Rhea" id="RHEA:15901"/>
        <dbReference type="ChEBI" id="CHEBI:58272"/>
        <dbReference type="ChEBI" id="CHEBI:58289"/>
        <dbReference type="EC" id="5.4.2.11"/>
    </reaction>
</comment>
<comment type="pathway">
    <text evidence="1">Carbohydrate degradation; glycolysis; pyruvate from D-glyceraldehyde 3-phosphate: step 3/5.</text>
</comment>
<comment type="subunit">
    <text evidence="1">Homodimer.</text>
</comment>
<comment type="similarity">
    <text evidence="1">Belongs to the phosphoglycerate mutase family. BPG-dependent PGAM subfamily.</text>
</comment>
<accession>A9W5P5</accession>
<evidence type="ECO:0000255" key="1">
    <source>
        <dbReference type="HAMAP-Rule" id="MF_01039"/>
    </source>
</evidence>
<gene>
    <name evidence="1" type="primary">gpmA</name>
    <name type="ordered locus">Mext_2506</name>
</gene>
<sequence length="212" mass="23878">MERLLVLARHGQSEWNLKKLFTGWRDPELTELGIDEARRAGRWLKSQGTQFDVAFTSNLRRAQHTCSLILEEMGQGGLETIRNEALNERDYGDLSGLNKDDARERWGDAQVHEWRRSYDVPPPGGESLKDTAARVLPYYIQTILPRVMSGERVLVAAHGNSLRALVMVLDGMTTKTIASLEIATGIPLVYRLKADTTVESKTVLDKDIDQDD</sequence>
<feature type="chain" id="PRO_1000149517" description="2,3-bisphosphoglycerate-dependent phosphoglycerate mutase">
    <location>
        <begin position="1"/>
        <end position="212"/>
    </location>
</feature>
<feature type="active site" description="Tele-phosphohistidine intermediate" evidence="1">
    <location>
        <position position="10"/>
    </location>
</feature>
<feature type="active site" description="Proton donor/acceptor" evidence="1">
    <location>
        <position position="88"/>
    </location>
</feature>
<feature type="binding site" evidence="1">
    <location>
        <begin position="9"/>
        <end position="16"/>
    </location>
    <ligand>
        <name>substrate</name>
    </ligand>
</feature>
<feature type="binding site" evidence="1">
    <location>
        <begin position="22"/>
        <end position="23"/>
    </location>
    <ligand>
        <name>substrate</name>
    </ligand>
</feature>
<feature type="binding site" evidence="1">
    <location>
        <position position="61"/>
    </location>
    <ligand>
        <name>substrate</name>
    </ligand>
</feature>
<feature type="binding site" evidence="1">
    <location>
        <begin position="88"/>
        <end position="91"/>
    </location>
    <ligand>
        <name>substrate</name>
    </ligand>
</feature>
<feature type="binding site" evidence="1">
    <location>
        <position position="99"/>
    </location>
    <ligand>
        <name>substrate</name>
    </ligand>
</feature>
<feature type="binding site" evidence="1">
    <location>
        <begin position="115"/>
        <end position="116"/>
    </location>
    <ligand>
        <name>substrate</name>
    </ligand>
</feature>
<feature type="binding site" evidence="1">
    <location>
        <begin position="159"/>
        <end position="160"/>
    </location>
    <ligand>
        <name>substrate</name>
    </ligand>
</feature>
<feature type="site" description="Transition state stabilizer" evidence="1">
    <location>
        <position position="158"/>
    </location>
</feature>